<feature type="chain" id="PRO_0000225019" description="UDP-N-acetylglucosamine--N-acetylmuramyl-(pentapeptide) pyrophosphoryl-undecaprenol N-acetylglucosamine transferase">
    <location>
        <begin position="1"/>
        <end position="365"/>
    </location>
</feature>
<feature type="binding site" evidence="1">
    <location>
        <begin position="19"/>
        <end position="21"/>
    </location>
    <ligand>
        <name>UDP-N-acetyl-alpha-D-glucosamine</name>
        <dbReference type="ChEBI" id="CHEBI:57705"/>
    </ligand>
</feature>
<feature type="binding site" evidence="1">
    <location>
        <position position="131"/>
    </location>
    <ligand>
        <name>UDP-N-acetyl-alpha-D-glucosamine</name>
        <dbReference type="ChEBI" id="CHEBI:57705"/>
    </ligand>
</feature>
<feature type="binding site" evidence="1">
    <location>
        <position position="170"/>
    </location>
    <ligand>
        <name>UDP-N-acetyl-alpha-D-glucosamine</name>
        <dbReference type="ChEBI" id="CHEBI:57705"/>
    </ligand>
</feature>
<feature type="binding site" evidence="1">
    <location>
        <position position="201"/>
    </location>
    <ligand>
        <name>UDP-N-acetyl-alpha-D-glucosamine</name>
        <dbReference type="ChEBI" id="CHEBI:57705"/>
    </ligand>
</feature>
<feature type="binding site" evidence="1">
    <location>
        <position position="255"/>
    </location>
    <ligand>
        <name>UDP-N-acetyl-alpha-D-glucosamine</name>
        <dbReference type="ChEBI" id="CHEBI:57705"/>
    </ligand>
</feature>
<feature type="binding site" evidence="1">
    <location>
        <begin position="274"/>
        <end position="279"/>
    </location>
    <ligand>
        <name>UDP-N-acetyl-alpha-D-glucosamine</name>
        <dbReference type="ChEBI" id="CHEBI:57705"/>
    </ligand>
</feature>
<feature type="binding site" evidence="1">
    <location>
        <position position="300"/>
    </location>
    <ligand>
        <name>UDP-N-acetyl-alpha-D-glucosamine</name>
        <dbReference type="ChEBI" id="CHEBI:57705"/>
    </ligand>
</feature>
<name>MURG_ACIAD</name>
<comment type="function">
    <text evidence="1">Cell wall formation. Catalyzes the transfer of a GlcNAc subunit on undecaprenyl-pyrophosphoryl-MurNAc-pentapeptide (lipid intermediate I) to form undecaprenyl-pyrophosphoryl-MurNAc-(pentapeptide)GlcNAc (lipid intermediate II).</text>
</comment>
<comment type="catalytic activity">
    <reaction evidence="1">
        <text>di-trans,octa-cis-undecaprenyl diphospho-N-acetyl-alpha-D-muramoyl-L-alanyl-D-glutamyl-meso-2,6-diaminopimeloyl-D-alanyl-D-alanine + UDP-N-acetyl-alpha-D-glucosamine = di-trans,octa-cis-undecaprenyl diphospho-[N-acetyl-alpha-D-glucosaminyl-(1-&gt;4)]-N-acetyl-alpha-D-muramoyl-L-alanyl-D-glutamyl-meso-2,6-diaminopimeloyl-D-alanyl-D-alanine + UDP + H(+)</text>
        <dbReference type="Rhea" id="RHEA:31227"/>
        <dbReference type="ChEBI" id="CHEBI:15378"/>
        <dbReference type="ChEBI" id="CHEBI:57705"/>
        <dbReference type="ChEBI" id="CHEBI:58223"/>
        <dbReference type="ChEBI" id="CHEBI:61387"/>
        <dbReference type="ChEBI" id="CHEBI:61388"/>
        <dbReference type="EC" id="2.4.1.227"/>
    </reaction>
</comment>
<comment type="pathway">
    <text evidence="1">Cell wall biogenesis; peptidoglycan biosynthesis.</text>
</comment>
<comment type="subcellular location">
    <subcellularLocation>
        <location evidence="1">Cell inner membrane</location>
        <topology evidence="1">Peripheral membrane protein</topology>
        <orientation evidence="1">Cytoplasmic side</orientation>
    </subcellularLocation>
</comment>
<comment type="similarity">
    <text evidence="1">Belongs to the glycosyltransferase 28 family. MurG subfamily.</text>
</comment>
<sequence length="365" mass="39444">MTDPSQVKPKHVMMMAAGTGGHVFPALAVAKQLQQHGCQVSWLATPAGMENRLLKDQNIPIYQIDIQGVRGNGAVRKLLAPFKILKATYSAMRYMKQLKVDAVAGFGGYVAGPGGLAARILGIPILIHEQNAVAGFTNTQLARVASKVCEAFPNTFPASAKRVTTGNPVRKEITAILSPKWRYDSREQAGQPLNILIVGGSLGAQALNERLPDALKNLNLPLNVFHQCGQKQFEETRVRYTNAPANMSVQVMPFIEDMAQAYRDADLIICRAGALTVTEVATAGVAAVFVPLPIAVDDHQTANARFLADVGAAKICQQSTMTPENLDALLKPLMNRQLLSEMAVKARQHAQPNATQHVVDLIQTL</sequence>
<proteinExistence type="inferred from homology"/>
<reference key="1">
    <citation type="journal article" date="2004" name="Nucleic Acids Res.">
        <title>Unique features revealed by the genome sequence of Acinetobacter sp. ADP1, a versatile and naturally transformation competent bacterium.</title>
        <authorList>
            <person name="Barbe V."/>
            <person name="Vallenet D."/>
            <person name="Fonknechten N."/>
            <person name="Kreimeyer A."/>
            <person name="Oztas S."/>
            <person name="Labarre L."/>
            <person name="Cruveiller S."/>
            <person name="Robert C."/>
            <person name="Duprat S."/>
            <person name="Wincker P."/>
            <person name="Ornston L.N."/>
            <person name="Weissenbach J."/>
            <person name="Marliere P."/>
            <person name="Cohen G.N."/>
            <person name="Medigue C."/>
        </authorList>
    </citation>
    <scope>NUCLEOTIDE SEQUENCE [LARGE SCALE GENOMIC DNA]</scope>
    <source>
        <strain>ATCC 33305 / BD413 / ADP1</strain>
    </source>
</reference>
<accession>Q6F703</accession>
<organism>
    <name type="scientific">Acinetobacter baylyi (strain ATCC 33305 / BD413 / ADP1)</name>
    <dbReference type="NCBI Taxonomy" id="62977"/>
    <lineage>
        <taxon>Bacteria</taxon>
        <taxon>Pseudomonadati</taxon>
        <taxon>Pseudomonadota</taxon>
        <taxon>Gammaproteobacteria</taxon>
        <taxon>Moraxellales</taxon>
        <taxon>Moraxellaceae</taxon>
        <taxon>Acinetobacter</taxon>
    </lineage>
</organism>
<evidence type="ECO:0000255" key="1">
    <source>
        <dbReference type="HAMAP-Rule" id="MF_00033"/>
    </source>
</evidence>
<protein>
    <recommendedName>
        <fullName evidence="1">UDP-N-acetylglucosamine--N-acetylmuramyl-(pentapeptide) pyrophosphoryl-undecaprenol N-acetylglucosamine transferase</fullName>
        <ecNumber evidence="1">2.4.1.227</ecNumber>
    </recommendedName>
    <alternativeName>
        <fullName evidence="1">Undecaprenyl-PP-MurNAc-pentapeptide-UDPGlcNAc GlcNAc transferase</fullName>
    </alternativeName>
</protein>
<dbReference type="EC" id="2.4.1.227" evidence="1"/>
<dbReference type="EMBL" id="CR543861">
    <property type="protein sequence ID" value="CAG70162.1"/>
    <property type="molecule type" value="Genomic_DNA"/>
</dbReference>
<dbReference type="RefSeq" id="WP_004923335.1">
    <property type="nucleotide sequence ID" value="NC_005966.1"/>
</dbReference>
<dbReference type="SMR" id="Q6F703"/>
<dbReference type="STRING" id="202950.GCA_001485005_01694"/>
<dbReference type="CAZy" id="GT28">
    <property type="family name" value="Glycosyltransferase Family 28"/>
</dbReference>
<dbReference type="GeneID" id="45235695"/>
<dbReference type="KEGG" id="aci:ACIAD3517"/>
<dbReference type="eggNOG" id="COG0707">
    <property type="taxonomic scope" value="Bacteria"/>
</dbReference>
<dbReference type="HOGENOM" id="CLU_037404_2_0_6"/>
<dbReference type="OrthoDB" id="9808936at2"/>
<dbReference type="BioCyc" id="ASP62977:ACIAD_RS15905-MONOMER"/>
<dbReference type="UniPathway" id="UPA00219"/>
<dbReference type="Proteomes" id="UP000000430">
    <property type="component" value="Chromosome"/>
</dbReference>
<dbReference type="GO" id="GO:0005886">
    <property type="term" value="C:plasma membrane"/>
    <property type="evidence" value="ECO:0007669"/>
    <property type="project" value="UniProtKB-SubCell"/>
</dbReference>
<dbReference type="GO" id="GO:0051991">
    <property type="term" value="F:UDP-N-acetyl-D-glucosamine:N-acetylmuramoyl-L-alanyl-D-glutamyl-meso-2,6-diaminopimelyl-D-alanyl-D-alanine-diphosphoundecaprenol 4-beta-N-acetylglucosaminlytransferase activity"/>
    <property type="evidence" value="ECO:0007669"/>
    <property type="project" value="RHEA"/>
</dbReference>
<dbReference type="GO" id="GO:0050511">
    <property type="term" value="F:undecaprenyldiphospho-muramoylpentapeptide beta-N-acetylglucosaminyltransferase activity"/>
    <property type="evidence" value="ECO:0007669"/>
    <property type="project" value="UniProtKB-UniRule"/>
</dbReference>
<dbReference type="GO" id="GO:0005975">
    <property type="term" value="P:carbohydrate metabolic process"/>
    <property type="evidence" value="ECO:0007669"/>
    <property type="project" value="InterPro"/>
</dbReference>
<dbReference type="GO" id="GO:0051301">
    <property type="term" value="P:cell division"/>
    <property type="evidence" value="ECO:0007669"/>
    <property type="project" value="UniProtKB-KW"/>
</dbReference>
<dbReference type="GO" id="GO:0071555">
    <property type="term" value="P:cell wall organization"/>
    <property type="evidence" value="ECO:0007669"/>
    <property type="project" value="UniProtKB-KW"/>
</dbReference>
<dbReference type="GO" id="GO:0030259">
    <property type="term" value="P:lipid glycosylation"/>
    <property type="evidence" value="ECO:0007669"/>
    <property type="project" value="UniProtKB-UniRule"/>
</dbReference>
<dbReference type="GO" id="GO:0009252">
    <property type="term" value="P:peptidoglycan biosynthetic process"/>
    <property type="evidence" value="ECO:0007669"/>
    <property type="project" value="UniProtKB-UniRule"/>
</dbReference>
<dbReference type="GO" id="GO:0008360">
    <property type="term" value="P:regulation of cell shape"/>
    <property type="evidence" value="ECO:0007669"/>
    <property type="project" value="UniProtKB-KW"/>
</dbReference>
<dbReference type="CDD" id="cd03785">
    <property type="entry name" value="GT28_MurG"/>
    <property type="match status" value="1"/>
</dbReference>
<dbReference type="Gene3D" id="3.40.50.2000">
    <property type="entry name" value="Glycogen Phosphorylase B"/>
    <property type="match status" value="2"/>
</dbReference>
<dbReference type="HAMAP" id="MF_00033">
    <property type="entry name" value="MurG"/>
    <property type="match status" value="1"/>
</dbReference>
<dbReference type="InterPro" id="IPR006009">
    <property type="entry name" value="GlcNAc_MurG"/>
</dbReference>
<dbReference type="InterPro" id="IPR007235">
    <property type="entry name" value="Glyco_trans_28_C"/>
</dbReference>
<dbReference type="InterPro" id="IPR004276">
    <property type="entry name" value="GlycoTrans_28_N"/>
</dbReference>
<dbReference type="NCBIfam" id="TIGR01133">
    <property type="entry name" value="murG"/>
    <property type="match status" value="1"/>
</dbReference>
<dbReference type="PANTHER" id="PTHR21015:SF22">
    <property type="entry name" value="GLYCOSYLTRANSFERASE"/>
    <property type="match status" value="1"/>
</dbReference>
<dbReference type="PANTHER" id="PTHR21015">
    <property type="entry name" value="UDP-N-ACETYLGLUCOSAMINE--N-ACETYLMURAMYL-(PENTAPEPTIDE) PYROPHOSPHORYL-UNDECAPRENOL N-ACETYLGLUCOSAMINE TRANSFERASE 1"/>
    <property type="match status" value="1"/>
</dbReference>
<dbReference type="Pfam" id="PF04101">
    <property type="entry name" value="Glyco_tran_28_C"/>
    <property type="match status" value="1"/>
</dbReference>
<dbReference type="Pfam" id="PF03033">
    <property type="entry name" value="Glyco_transf_28"/>
    <property type="match status" value="1"/>
</dbReference>
<dbReference type="SUPFAM" id="SSF53756">
    <property type="entry name" value="UDP-Glycosyltransferase/glycogen phosphorylase"/>
    <property type="match status" value="1"/>
</dbReference>
<keyword id="KW-0131">Cell cycle</keyword>
<keyword id="KW-0132">Cell division</keyword>
<keyword id="KW-0997">Cell inner membrane</keyword>
<keyword id="KW-1003">Cell membrane</keyword>
<keyword id="KW-0133">Cell shape</keyword>
<keyword id="KW-0961">Cell wall biogenesis/degradation</keyword>
<keyword id="KW-0328">Glycosyltransferase</keyword>
<keyword id="KW-0472">Membrane</keyword>
<keyword id="KW-0573">Peptidoglycan synthesis</keyword>
<keyword id="KW-0808">Transferase</keyword>
<gene>
    <name evidence="1" type="primary">murG</name>
    <name type="ordered locus">ACIAD3517</name>
</gene>